<evidence type="ECO:0000305" key="1"/>
<geneLocation type="mitochondrion"/>
<organism>
    <name type="scientific">Arabidopsis thaliana</name>
    <name type="common">Mouse-ear cress</name>
    <dbReference type="NCBI Taxonomy" id="3702"/>
    <lineage>
        <taxon>Eukaryota</taxon>
        <taxon>Viridiplantae</taxon>
        <taxon>Streptophyta</taxon>
        <taxon>Embryophyta</taxon>
        <taxon>Tracheophyta</taxon>
        <taxon>Spermatophyta</taxon>
        <taxon>Magnoliopsida</taxon>
        <taxon>eudicotyledons</taxon>
        <taxon>Gunneridae</taxon>
        <taxon>Pentapetalae</taxon>
        <taxon>rosids</taxon>
        <taxon>malvids</taxon>
        <taxon>Brassicales</taxon>
        <taxon>Brassicaceae</taxon>
        <taxon>Camelineae</taxon>
        <taxon>Arabidopsis</taxon>
    </lineage>
</organism>
<accession>P93291</accession>
<feature type="chain" id="PRO_0000196762" description="Uncharacterized mitochondrial protein AtMg00260">
    <location>
        <begin position="1"/>
        <end position="101"/>
    </location>
</feature>
<sequence>MSRLELGKEAVALLTLYEEGVKSLAIVDTLRSARQEQYRKHRMPWFLLQTRLQVRVIESAQLGMLPMPIPELLKEAVAVQPLNLNGIAHSSSSINSFLLFE</sequence>
<name>M260_ARATH</name>
<reference key="1">
    <citation type="journal article" date="1997" name="Nat. Genet.">
        <title>The mitochondrial genome of Arabidopsis thaliana contains 57 genes in 366,924 nucleotides.</title>
        <authorList>
            <person name="Unseld M."/>
            <person name="Marienfeld J.R."/>
            <person name="Brandt P."/>
            <person name="Brennicke A."/>
        </authorList>
    </citation>
    <scope>NUCLEOTIDE SEQUENCE [LARGE SCALE GENOMIC DNA]</scope>
    <source>
        <strain>cv. C24</strain>
    </source>
</reference>
<reference key="2">
    <citation type="journal article" date="2018" name="Plant Cell">
        <title>Correction of persistent errors in Arabidopsis reference mitochondrial genomes.</title>
        <authorList>
            <person name="Sloan D.B."/>
            <person name="Wu Z."/>
            <person name="Sharbrough J."/>
        </authorList>
    </citation>
    <scope>NUCLEOTIDE SEQUENCE [LARGE SCALE GENOMIC DNA]</scope>
    <source>
        <strain>cv. Columbia</strain>
    </source>
</reference>
<reference key="3">
    <citation type="journal article" date="1999" name="Nature">
        <title>Sequence and analysis of chromosome 2 of the plant Arabidopsis thaliana.</title>
        <authorList>
            <person name="Lin X."/>
            <person name="Kaul S."/>
            <person name="Rounsley S.D."/>
            <person name="Shea T.P."/>
            <person name="Benito M.-I."/>
            <person name="Town C.D."/>
            <person name="Fujii C.Y."/>
            <person name="Mason T.M."/>
            <person name="Bowman C.L."/>
            <person name="Barnstead M.E."/>
            <person name="Feldblyum T.V."/>
            <person name="Buell C.R."/>
            <person name="Ketchum K.A."/>
            <person name="Lee J.J."/>
            <person name="Ronning C.M."/>
            <person name="Koo H.L."/>
            <person name="Moffat K.S."/>
            <person name="Cronin L.A."/>
            <person name="Shen M."/>
            <person name="Pai G."/>
            <person name="Van Aken S."/>
            <person name="Umayam L."/>
            <person name="Tallon L.J."/>
            <person name="Gill J.E."/>
            <person name="Adams M.D."/>
            <person name="Carrera A.J."/>
            <person name="Creasy T.H."/>
            <person name="Goodman H.M."/>
            <person name="Somerville C.R."/>
            <person name="Copenhaver G.P."/>
            <person name="Preuss D."/>
            <person name="Nierman W.C."/>
            <person name="White O."/>
            <person name="Eisen J.A."/>
            <person name="Salzberg S.L."/>
            <person name="Fraser C.M."/>
            <person name="Venter J.C."/>
        </authorList>
    </citation>
    <scope>NUCLEOTIDE SEQUENCE [LARGE SCALE GENOMIC DNA]</scope>
    <source>
        <strain>cv. Columbia</strain>
    </source>
</reference>
<gene>
    <name type="ordered locus">AtMg00260</name>
</gene>
<comment type="subcellular location">
    <subcellularLocation>
        <location evidence="1">Mitochondrion</location>
    </subcellularLocation>
</comment>
<comment type="miscellaneous">
    <text>A stretch of 270 kb of the mitochondrial genome is duplicated within the centromere of chromosome 2 resulting in the duplication of the gene. The expression of the duplicated gene is not demonstrated.</text>
</comment>
<comment type="sequence caution" evidence="1">
    <conflict type="erroneous termination">
        <sequence resource="EMBL" id="AC006225"/>
    </conflict>
    <text>Truncated C-terminus.</text>
</comment>
<keyword id="KW-0496">Mitochondrion</keyword>
<keyword id="KW-1185">Reference proteome</keyword>
<protein>
    <recommendedName>
        <fullName>Uncharacterized mitochondrial protein AtMg00260</fullName>
    </recommendedName>
    <alternativeName>
        <fullName>ORF101a</fullName>
    </alternativeName>
</protein>
<dbReference type="EMBL" id="Y08501">
    <property type="protein sequence ID" value="CAA69768.1"/>
    <property type="molecule type" value="Genomic_DNA"/>
</dbReference>
<dbReference type="EMBL" id="BK010421">
    <property type="status" value="NOT_ANNOTATED_CDS"/>
    <property type="molecule type" value="Genomic_DNA"/>
</dbReference>
<dbReference type="EMBL" id="AC006225">
    <property type="status" value="NOT_ANNOTATED_CDS"/>
    <property type="molecule type" value="Genomic_DNA"/>
</dbReference>
<dbReference type="RefSeq" id="NP_085494.1">
    <property type="nucleotide sequence ID" value="NC_001284.2"/>
</dbReference>
<dbReference type="STRING" id="3702.P93291"/>
<dbReference type="PaxDb" id="3702-ATMG00260.1"/>
<dbReference type="EnsemblPlants" id="ATMG00260.1">
    <property type="protein sequence ID" value="ATMG00260.1"/>
    <property type="gene ID" value="ATMG00260"/>
</dbReference>
<dbReference type="Gramene" id="ATMG00260.1">
    <property type="protein sequence ID" value="ATMG00260.1"/>
    <property type="gene ID" value="ATMG00260"/>
</dbReference>
<dbReference type="Araport" id="ATMG00260"/>
<dbReference type="TAIR" id="ATMG00260">
    <property type="gene designation" value="ORF101A"/>
</dbReference>
<dbReference type="HOGENOM" id="CLU_2295564_0_0_1"/>
<dbReference type="InParanoid" id="P93291"/>
<dbReference type="PRO" id="PR:P93291"/>
<dbReference type="Proteomes" id="UP000006548">
    <property type="component" value="Mitochondrion MT"/>
</dbReference>
<dbReference type="GO" id="GO:0005739">
    <property type="term" value="C:mitochondrion"/>
    <property type="evidence" value="ECO:0007669"/>
    <property type="project" value="UniProtKB-SubCell"/>
</dbReference>
<proteinExistence type="predicted"/>